<sequence>MKIGIIGAMEEEVTLLRDKIENRQTITLGGCEIYTGQLNGTEIALLKSGIGKVAAALGATLLLERCKPDVIINTGSAGGLAPTLTVGDIVVSDEARYHDADVTAFGYEFGQLPGCPAGFKADDALIAAAESCIAKLNLNAVRGLIVSGDAFINGSVGLAKIRHNFPQAIAVEMEATAIAHVCHNFNVPFVVVRAISDVADQQSHLSFDEFLAVAAKQSSLMVETLVQKLAHG</sequence>
<organism>
    <name type="scientific">Citrobacter koseri (strain ATCC BAA-895 / CDC 4225-83 / SGSC4696)</name>
    <dbReference type="NCBI Taxonomy" id="290338"/>
    <lineage>
        <taxon>Bacteria</taxon>
        <taxon>Pseudomonadati</taxon>
        <taxon>Pseudomonadota</taxon>
        <taxon>Gammaproteobacteria</taxon>
        <taxon>Enterobacterales</taxon>
        <taxon>Enterobacteriaceae</taxon>
        <taxon>Citrobacter</taxon>
    </lineage>
</organism>
<comment type="function">
    <text evidence="1">Catalyzes the irreversible cleavage of the glycosidic bond in both 5'-methylthioadenosine (MTA) and S-adenosylhomocysteine (SAH/AdoHcy) to adenine and the corresponding thioribose, 5'-methylthioribose and S-ribosylhomocysteine, respectively. Also cleaves 5'-deoxyadenosine, a toxic by-product of radical S-adenosylmethionine (SAM) enzymes, into 5-deoxyribose and adenine. Thus, is required for in vivo function of the radical SAM enzymes biotin synthase and lipoic acid synthase, that are inhibited by 5'-deoxyadenosine accumulation.</text>
</comment>
<comment type="catalytic activity">
    <reaction evidence="1">
        <text>S-adenosyl-L-homocysteine + H2O = S-(5-deoxy-D-ribos-5-yl)-L-homocysteine + adenine</text>
        <dbReference type="Rhea" id="RHEA:17805"/>
        <dbReference type="ChEBI" id="CHEBI:15377"/>
        <dbReference type="ChEBI" id="CHEBI:16708"/>
        <dbReference type="ChEBI" id="CHEBI:57856"/>
        <dbReference type="ChEBI" id="CHEBI:58195"/>
        <dbReference type="EC" id="3.2.2.9"/>
    </reaction>
</comment>
<comment type="catalytic activity">
    <reaction evidence="1">
        <text>S-methyl-5'-thioadenosine + H2O = 5-(methylsulfanyl)-D-ribose + adenine</text>
        <dbReference type="Rhea" id="RHEA:13617"/>
        <dbReference type="ChEBI" id="CHEBI:15377"/>
        <dbReference type="ChEBI" id="CHEBI:16708"/>
        <dbReference type="ChEBI" id="CHEBI:17509"/>
        <dbReference type="ChEBI" id="CHEBI:78440"/>
        <dbReference type="EC" id="3.2.2.9"/>
    </reaction>
</comment>
<comment type="catalytic activity">
    <reaction evidence="1">
        <text>5'-deoxyadenosine + H2O = 5-deoxy-D-ribose + adenine</text>
        <dbReference type="Rhea" id="RHEA:29859"/>
        <dbReference type="ChEBI" id="CHEBI:15377"/>
        <dbReference type="ChEBI" id="CHEBI:16708"/>
        <dbReference type="ChEBI" id="CHEBI:17319"/>
        <dbReference type="ChEBI" id="CHEBI:149540"/>
        <dbReference type="EC" id="3.2.2.9"/>
    </reaction>
    <physiologicalReaction direction="left-to-right" evidence="1">
        <dbReference type="Rhea" id="RHEA:29860"/>
    </physiologicalReaction>
</comment>
<comment type="pathway">
    <text evidence="1">Amino-acid biosynthesis; L-methionine biosynthesis via salvage pathway; S-methyl-5-thio-alpha-D-ribose 1-phosphate from S-methyl-5'-thioadenosine (hydrolase route): step 1/2.</text>
</comment>
<comment type="subunit">
    <text evidence="1">Homodimer.</text>
</comment>
<comment type="similarity">
    <text evidence="1">Belongs to the PNP/UDP phosphorylase family. MtnN subfamily.</text>
</comment>
<gene>
    <name evidence="1" type="primary">mtnN</name>
    <name type="ordered locus">CKO_03208</name>
</gene>
<name>MTNN_CITK8</name>
<accession>A8ALC9</accession>
<keyword id="KW-0028">Amino-acid biosynthesis</keyword>
<keyword id="KW-0378">Hydrolase</keyword>
<keyword id="KW-0486">Methionine biosynthesis</keyword>
<keyword id="KW-1185">Reference proteome</keyword>
<feature type="chain" id="PRO_0000359286" description="5'-methylthioadenosine/S-adenosylhomocysteine nucleosidase">
    <location>
        <begin position="1"/>
        <end position="232"/>
    </location>
</feature>
<feature type="active site" description="Proton acceptor" evidence="1">
    <location>
        <position position="12"/>
    </location>
</feature>
<feature type="active site" description="Proton donor" evidence="1">
    <location>
        <position position="197"/>
    </location>
</feature>
<feature type="binding site" evidence="1">
    <location>
        <position position="78"/>
    </location>
    <ligand>
        <name>substrate</name>
    </ligand>
</feature>
<feature type="binding site" evidence="1">
    <location>
        <position position="152"/>
    </location>
    <ligand>
        <name>substrate</name>
    </ligand>
</feature>
<feature type="binding site" evidence="1">
    <location>
        <begin position="173"/>
        <end position="174"/>
    </location>
    <ligand>
        <name>substrate</name>
    </ligand>
</feature>
<proteinExistence type="inferred from homology"/>
<protein>
    <recommendedName>
        <fullName evidence="1">5'-methylthioadenosine/S-adenosylhomocysteine nucleosidase</fullName>
        <shortName evidence="1">MTA/SAH nucleosidase</shortName>
        <shortName evidence="1">MTAN</shortName>
        <ecNumber evidence="1">3.2.2.9</ecNumber>
    </recommendedName>
    <alternativeName>
        <fullName evidence="1">5'-deoxyadenosine nucleosidase</fullName>
        <shortName evidence="1">DOA nucleosidase</shortName>
        <shortName evidence="1">dAdo nucleosidase</shortName>
    </alternativeName>
    <alternativeName>
        <fullName evidence="1">5'-methylthioadenosine nucleosidase</fullName>
        <shortName evidence="1">MTA nucleosidase</shortName>
    </alternativeName>
    <alternativeName>
        <fullName evidence="1">S-adenosylhomocysteine nucleosidase</fullName>
        <shortName evidence="1">AdoHcy nucleosidase</shortName>
        <shortName evidence="1">SAH nucleosidase</shortName>
        <shortName evidence="1">SRH nucleosidase</shortName>
    </alternativeName>
</protein>
<evidence type="ECO:0000255" key="1">
    <source>
        <dbReference type="HAMAP-Rule" id="MF_01684"/>
    </source>
</evidence>
<reference key="1">
    <citation type="submission" date="2007-08" db="EMBL/GenBank/DDBJ databases">
        <authorList>
            <consortium name="The Citrobacter koseri Genome Sequencing Project"/>
            <person name="McClelland M."/>
            <person name="Sanderson E.K."/>
            <person name="Porwollik S."/>
            <person name="Spieth J."/>
            <person name="Clifton W.S."/>
            <person name="Latreille P."/>
            <person name="Courtney L."/>
            <person name="Wang C."/>
            <person name="Pepin K."/>
            <person name="Bhonagiri V."/>
            <person name="Nash W."/>
            <person name="Johnson M."/>
            <person name="Thiruvilangam P."/>
            <person name="Wilson R."/>
        </authorList>
    </citation>
    <scope>NUCLEOTIDE SEQUENCE [LARGE SCALE GENOMIC DNA]</scope>
    <source>
        <strain>ATCC BAA-895 / CDC 4225-83 / SGSC4696</strain>
    </source>
</reference>
<dbReference type="EC" id="3.2.2.9" evidence="1"/>
<dbReference type="EMBL" id="CP000822">
    <property type="protein sequence ID" value="ABV14292.1"/>
    <property type="molecule type" value="Genomic_DNA"/>
</dbReference>
<dbReference type="RefSeq" id="WP_012133998.1">
    <property type="nucleotide sequence ID" value="NC_009792.1"/>
</dbReference>
<dbReference type="SMR" id="A8ALC9"/>
<dbReference type="STRING" id="290338.CKO_03208"/>
<dbReference type="GeneID" id="45136990"/>
<dbReference type="KEGG" id="cko:CKO_03208"/>
<dbReference type="HOGENOM" id="CLU_031248_2_2_6"/>
<dbReference type="OrthoDB" id="9792278at2"/>
<dbReference type="UniPathway" id="UPA00904">
    <property type="reaction ID" value="UER00871"/>
</dbReference>
<dbReference type="Proteomes" id="UP000008148">
    <property type="component" value="Chromosome"/>
</dbReference>
<dbReference type="GO" id="GO:0005829">
    <property type="term" value="C:cytosol"/>
    <property type="evidence" value="ECO:0007669"/>
    <property type="project" value="TreeGrafter"/>
</dbReference>
<dbReference type="GO" id="GO:0008782">
    <property type="term" value="F:adenosylhomocysteine nucleosidase activity"/>
    <property type="evidence" value="ECO:0007669"/>
    <property type="project" value="UniProtKB-UniRule"/>
</dbReference>
<dbReference type="GO" id="GO:0008930">
    <property type="term" value="F:methylthioadenosine nucleosidase activity"/>
    <property type="evidence" value="ECO:0007669"/>
    <property type="project" value="UniProtKB-UniRule"/>
</dbReference>
<dbReference type="GO" id="GO:0019509">
    <property type="term" value="P:L-methionine salvage from methylthioadenosine"/>
    <property type="evidence" value="ECO:0007669"/>
    <property type="project" value="UniProtKB-UniRule"/>
</dbReference>
<dbReference type="GO" id="GO:0019284">
    <property type="term" value="P:L-methionine salvage from S-adenosylmethionine"/>
    <property type="evidence" value="ECO:0007669"/>
    <property type="project" value="TreeGrafter"/>
</dbReference>
<dbReference type="GO" id="GO:0046124">
    <property type="term" value="P:purine deoxyribonucleoside catabolic process"/>
    <property type="evidence" value="ECO:0007669"/>
    <property type="project" value="UniProtKB-UniRule"/>
</dbReference>
<dbReference type="CDD" id="cd09008">
    <property type="entry name" value="MTAN"/>
    <property type="match status" value="1"/>
</dbReference>
<dbReference type="FunFam" id="3.40.50.1580:FF:000001">
    <property type="entry name" value="MTA/SAH nucleosidase family protein"/>
    <property type="match status" value="1"/>
</dbReference>
<dbReference type="Gene3D" id="3.40.50.1580">
    <property type="entry name" value="Nucleoside phosphorylase domain"/>
    <property type="match status" value="1"/>
</dbReference>
<dbReference type="HAMAP" id="MF_01684">
    <property type="entry name" value="Salvage_MtnN"/>
    <property type="match status" value="1"/>
</dbReference>
<dbReference type="InterPro" id="IPR010049">
    <property type="entry name" value="MTA_SAH_Nsdase"/>
</dbReference>
<dbReference type="InterPro" id="IPR000845">
    <property type="entry name" value="Nucleoside_phosphorylase_d"/>
</dbReference>
<dbReference type="InterPro" id="IPR035994">
    <property type="entry name" value="Nucleoside_phosphorylase_sf"/>
</dbReference>
<dbReference type="NCBIfam" id="TIGR01704">
    <property type="entry name" value="MTA_SAH-Nsdase"/>
    <property type="match status" value="1"/>
</dbReference>
<dbReference type="NCBIfam" id="NF004079">
    <property type="entry name" value="PRK05584.1"/>
    <property type="match status" value="1"/>
</dbReference>
<dbReference type="PANTHER" id="PTHR46832">
    <property type="entry name" value="5'-METHYLTHIOADENOSINE/S-ADENOSYLHOMOCYSTEINE NUCLEOSIDASE"/>
    <property type="match status" value="1"/>
</dbReference>
<dbReference type="PANTHER" id="PTHR46832:SF1">
    <property type="entry name" value="5'-METHYLTHIOADENOSINE_S-ADENOSYLHOMOCYSTEINE NUCLEOSIDASE"/>
    <property type="match status" value="1"/>
</dbReference>
<dbReference type="Pfam" id="PF01048">
    <property type="entry name" value="PNP_UDP_1"/>
    <property type="match status" value="1"/>
</dbReference>
<dbReference type="SUPFAM" id="SSF53167">
    <property type="entry name" value="Purine and uridine phosphorylases"/>
    <property type="match status" value="1"/>
</dbReference>